<reference key="1">
    <citation type="submission" date="2007-06" db="EMBL/GenBank/DDBJ databases">
        <title>Complete sequence of chromosome of Staphylococcus aureus subsp. aureus JH1.</title>
        <authorList>
            <consortium name="US DOE Joint Genome Institute"/>
            <person name="Copeland A."/>
            <person name="Lucas S."/>
            <person name="Lapidus A."/>
            <person name="Barry K."/>
            <person name="Detter J.C."/>
            <person name="Glavina del Rio T."/>
            <person name="Hammon N."/>
            <person name="Israni S."/>
            <person name="Dalin E."/>
            <person name="Tice H."/>
            <person name="Pitluck S."/>
            <person name="Chain P."/>
            <person name="Malfatti S."/>
            <person name="Shin M."/>
            <person name="Vergez L."/>
            <person name="Schmutz J."/>
            <person name="Larimer F."/>
            <person name="Land M."/>
            <person name="Hauser L."/>
            <person name="Kyrpides N."/>
            <person name="Ivanova N."/>
            <person name="Tomasz A."/>
            <person name="Richardson P."/>
        </authorList>
    </citation>
    <scope>NUCLEOTIDE SEQUENCE [LARGE SCALE GENOMIC DNA]</scope>
    <source>
        <strain>JH1</strain>
    </source>
</reference>
<name>RLMH_STAA2</name>
<keyword id="KW-0963">Cytoplasm</keyword>
<keyword id="KW-0489">Methyltransferase</keyword>
<keyword id="KW-0698">rRNA processing</keyword>
<keyword id="KW-0949">S-adenosyl-L-methionine</keyword>
<keyword id="KW-0808">Transferase</keyword>
<gene>
    <name evidence="1" type="primary">rlmH</name>
    <name type="ordered locus">SaurJH1_0024</name>
</gene>
<proteinExistence type="inferred from homology"/>
<dbReference type="EC" id="2.1.1.177" evidence="1"/>
<dbReference type="EMBL" id="CP000736">
    <property type="protein sequence ID" value="ABR50892.1"/>
    <property type="molecule type" value="Genomic_DNA"/>
</dbReference>
<dbReference type="SMR" id="A6TXH4"/>
<dbReference type="KEGG" id="sah:SaurJH1_0024"/>
<dbReference type="HOGENOM" id="CLU_100552_0_0_9"/>
<dbReference type="GO" id="GO:0005737">
    <property type="term" value="C:cytoplasm"/>
    <property type="evidence" value="ECO:0007669"/>
    <property type="project" value="UniProtKB-SubCell"/>
</dbReference>
<dbReference type="GO" id="GO:0070038">
    <property type="term" value="F:rRNA (pseudouridine-N3-)-methyltransferase activity"/>
    <property type="evidence" value="ECO:0007669"/>
    <property type="project" value="UniProtKB-UniRule"/>
</dbReference>
<dbReference type="CDD" id="cd18081">
    <property type="entry name" value="RlmH-like"/>
    <property type="match status" value="1"/>
</dbReference>
<dbReference type="Gene3D" id="3.40.1280.10">
    <property type="match status" value="1"/>
</dbReference>
<dbReference type="HAMAP" id="MF_00658">
    <property type="entry name" value="23SrRNA_methyltr_H"/>
    <property type="match status" value="1"/>
</dbReference>
<dbReference type="InterPro" id="IPR029028">
    <property type="entry name" value="Alpha/beta_knot_MTases"/>
</dbReference>
<dbReference type="InterPro" id="IPR003742">
    <property type="entry name" value="RlmH-like"/>
</dbReference>
<dbReference type="InterPro" id="IPR029026">
    <property type="entry name" value="tRNA_m1G_MTases_N"/>
</dbReference>
<dbReference type="NCBIfam" id="NF000985">
    <property type="entry name" value="PRK00103.1-3"/>
    <property type="match status" value="1"/>
</dbReference>
<dbReference type="NCBIfam" id="NF000986">
    <property type="entry name" value="PRK00103.1-4"/>
    <property type="match status" value="1"/>
</dbReference>
<dbReference type="NCBIfam" id="TIGR00246">
    <property type="entry name" value="tRNA_RlmH_YbeA"/>
    <property type="match status" value="1"/>
</dbReference>
<dbReference type="PANTHER" id="PTHR33603">
    <property type="entry name" value="METHYLTRANSFERASE"/>
    <property type="match status" value="1"/>
</dbReference>
<dbReference type="PANTHER" id="PTHR33603:SF1">
    <property type="entry name" value="RIBOSOMAL RNA LARGE SUBUNIT METHYLTRANSFERASE H"/>
    <property type="match status" value="1"/>
</dbReference>
<dbReference type="Pfam" id="PF02590">
    <property type="entry name" value="SPOUT_MTase"/>
    <property type="match status" value="1"/>
</dbReference>
<dbReference type="PIRSF" id="PIRSF004505">
    <property type="entry name" value="MT_bac"/>
    <property type="match status" value="1"/>
</dbReference>
<dbReference type="SUPFAM" id="SSF75217">
    <property type="entry name" value="alpha/beta knot"/>
    <property type="match status" value="1"/>
</dbReference>
<comment type="function">
    <text evidence="1">Specifically methylates the pseudouridine at position 1915 (m3Psi1915) in 23S rRNA.</text>
</comment>
<comment type="catalytic activity">
    <reaction evidence="1">
        <text>pseudouridine(1915) in 23S rRNA + S-adenosyl-L-methionine = N(3)-methylpseudouridine(1915) in 23S rRNA + S-adenosyl-L-homocysteine + H(+)</text>
        <dbReference type="Rhea" id="RHEA:42752"/>
        <dbReference type="Rhea" id="RHEA-COMP:10221"/>
        <dbReference type="Rhea" id="RHEA-COMP:10222"/>
        <dbReference type="ChEBI" id="CHEBI:15378"/>
        <dbReference type="ChEBI" id="CHEBI:57856"/>
        <dbReference type="ChEBI" id="CHEBI:59789"/>
        <dbReference type="ChEBI" id="CHEBI:65314"/>
        <dbReference type="ChEBI" id="CHEBI:74486"/>
        <dbReference type="EC" id="2.1.1.177"/>
    </reaction>
</comment>
<comment type="subunit">
    <text evidence="1">Homodimer.</text>
</comment>
<comment type="subcellular location">
    <subcellularLocation>
        <location evidence="1">Cytoplasm</location>
    </subcellularLocation>
</comment>
<comment type="similarity">
    <text evidence="1">Belongs to the RNA methyltransferase RlmH family.</text>
</comment>
<evidence type="ECO:0000255" key="1">
    <source>
        <dbReference type="HAMAP-Rule" id="MF_00658"/>
    </source>
</evidence>
<protein>
    <recommendedName>
        <fullName evidence="1">Ribosomal RNA large subunit methyltransferase H</fullName>
        <ecNumber evidence="1">2.1.1.177</ecNumber>
    </recommendedName>
    <alternativeName>
        <fullName evidence="1">23S rRNA (pseudouridine1915-N3)-methyltransferase</fullName>
    </alternativeName>
    <alternativeName>
        <fullName evidence="1">23S rRNA m3Psi1915 methyltransferase</fullName>
    </alternativeName>
    <alternativeName>
        <fullName evidence="1">rRNA (pseudouridine-N3-)-methyltransferase RlmH</fullName>
    </alternativeName>
</protein>
<sequence length="159" mass="18306">MKITILAVGKLKEKYWKQAIAEYEKRLGPYTKIDIIEVPDEKAPENMSDKEIEQVKEKEGQRILAKIKPQSTVITLEIQGKMLSSEGLAQELNQRMTQGQSDFVFVIGGSNGLHKDVLQRSNYALSFSKMTFPHQMMRVVLIEQVYRAFKIMRGEAYHK</sequence>
<accession>A6TXH4</accession>
<feature type="chain" id="PRO_1000082818" description="Ribosomal RNA large subunit methyltransferase H">
    <location>
        <begin position="1"/>
        <end position="159"/>
    </location>
</feature>
<feature type="binding site" evidence="1">
    <location>
        <position position="76"/>
    </location>
    <ligand>
        <name>S-adenosyl-L-methionine</name>
        <dbReference type="ChEBI" id="CHEBI:59789"/>
    </ligand>
</feature>
<feature type="binding site" evidence="1">
    <location>
        <position position="108"/>
    </location>
    <ligand>
        <name>S-adenosyl-L-methionine</name>
        <dbReference type="ChEBI" id="CHEBI:59789"/>
    </ligand>
</feature>
<feature type="binding site" evidence="1">
    <location>
        <begin position="127"/>
        <end position="132"/>
    </location>
    <ligand>
        <name>S-adenosyl-L-methionine</name>
        <dbReference type="ChEBI" id="CHEBI:59789"/>
    </ligand>
</feature>
<organism>
    <name type="scientific">Staphylococcus aureus (strain JH1)</name>
    <dbReference type="NCBI Taxonomy" id="359787"/>
    <lineage>
        <taxon>Bacteria</taxon>
        <taxon>Bacillati</taxon>
        <taxon>Bacillota</taxon>
        <taxon>Bacilli</taxon>
        <taxon>Bacillales</taxon>
        <taxon>Staphylococcaceae</taxon>
        <taxon>Staphylococcus</taxon>
    </lineage>
</organism>